<feature type="chain" id="PRO_0000412316" description="Signal peptidase complex catalytic subunit sec11">
    <location>
        <begin position="1"/>
        <end position="192"/>
    </location>
</feature>
<feature type="topological domain" description="Cytoplasmic" evidence="3">
    <location>
        <begin position="1"/>
        <end position="18"/>
    </location>
</feature>
<feature type="transmembrane region" description="Helical; Signal-anchor for type II membrane protein" evidence="3">
    <location>
        <begin position="19"/>
        <end position="39"/>
    </location>
</feature>
<feature type="topological domain" description="Lumenal" evidence="3">
    <location>
        <begin position="40"/>
        <end position="192"/>
    </location>
</feature>
<feature type="region of interest" description="C-terminal short (CTS) helix" evidence="2">
    <location>
        <begin position="177"/>
        <end position="188"/>
    </location>
</feature>
<feature type="active site" description="Charge relay system" evidence="1">
    <location>
        <position position="53"/>
    </location>
</feature>
<feature type="active site" description="Charge relay system" evidence="1">
    <location>
        <position position="92"/>
    </location>
</feature>
<feature type="active site" description="Charge relay system" evidence="1">
    <location>
        <position position="133"/>
    </location>
</feature>
<keyword id="KW-0256">Endoplasmic reticulum</keyword>
<keyword id="KW-0378">Hydrolase</keyword>
<keyword id="KW-0472">Membrane</keyword>
<keyword id="KW-0645">Protease</keyword>
<keyword id="KW-1185">Reference proteome</keyword>
<keyword id="KW-0735">Signal-anchor</keyword>
<keyword id="KW-0812">Transmembrane</keyword>
<keyword id="KW-1133">Transmembrane helix</keyword>
<name>SEC11_ASPCL</name>
<organism>
    <name type="scientific">Aspergillus clavatus (strain ATCC 1007 / CBS 513.65 / DSM 816 / NCTC 3887 / NRRL 1 / QM 1276 / 107)</name>
    <dbReference type="NCBI Taxonomy" id="344612"/>
    <lineage>
        <taxon>Eukaryota</taxon>
        <taxon>Fungi</taxon>
        <taxon>Dikarya</taxon>
        <taxon>Ascomycota</taxon>
        <taxon>Pezizomycotina</taxon>
        <taxon>Eurotiomycetes</taxon>
        <taxon>Eurotiomycetidae</taxon>
        <taxon>Eurotiales</taxon>
        <taxon>Aspergillaceae</taxon>
        <taxon>Aspergillus</taxon>
        <taxon>Aspergillus subgen. Fumigati</taxon>
    </lineage>
</organism>
<dbReference type="EC" id="3.4.21.89" evidence="1"/>
<dbReference type="EMBL" id="DS027056">
    <property type="protein sequence ID" value="EAW09853.1"/>
    <property type="molecule type" value="Genomic_DNA"/>
</dbReference>
<dbReference type="RefSeq" id="XP_001271279.1">
    <property type="nucleotide sequence ID" value="XM_001271278.1"/>
</dbReference>
<dbReference type="SMR" id="A1CL29"/>
<dbReference type="STRING" id="344612.A1CL29"/>
<dbReference type="MEROPS" id="S26.010"/>
<dbReference type="EnsemblFungi" id="EAW09853">
    <property type="protein sequence ID" value="EAW09853"/>
    <property type="gene ID" value="ACLA_040690"/>
</dbReference>
<dbReference type="GeneID" id="4703571"/>
<dbReference type="KEGG" id="act:ACLA_040690"/>
<dbReference type="VEuPathDB" id="FungiDB:ACLA_040690"/>
<dbReference type="eggNOG" id="KOG3342">
    <property type="taxonomic scope" value="Eukaryota"/>
</dbReference>
<dbReference type="HOGENOM" id="CLU_089996_0_0_1"/>
<dbReference type="OMA" id="ILMNEYP"/>
<dbReference type="OrthoDB" id="10257561at2759"/>
<dbReference type="Proteomes" id="UP000006701">
    <property type="component" value="Unassembled WGS sequence"/>
</dbReference>
<dbReference type="GO" id="GO:0005787">
    <property type="term" value="C:signal peptidase complex"/>
    <property type="evidence" value="ECO:0007669"/>
    <property type="project" value="EnsemblFungi"/>
</dbReference>
<dbReference type="GO" id="GO:0004252">
    <property type="term" value="F:serine-type endopeptidase activity"/>
    <property type="evidence" value="ECO:0007669"/>
    <property type="project" value="UniProtKB-EC"/>
</dbReference>
<dbReference type="GO" id="GO:0045047">
    <property type="term" value="P:protein targeting to ER"/>
    <property type="evidence" value="ECO:0007669"/>
    <property type="project" value="EnsemblFungi"/>
</dbReference>
<dbReference type="GO" id="GO:0006465">
    <property type="term" value="P:signal peptide processing"/>
    <property type="evidence" value="ECO:0007669"/>
    <property type="project" value="EnsemblFungi"/>
</dbReference>
<dbReference type="CDD" id="cd06530">
    <property type="entry name" value="S26_SPase_I"/>
    <property type="match status" value="1"/>
</dbReference>
<dbReference type="InterPro" id="IPR036286">
    <property type="entry name" value="LexA/Signal_pep-like_sf"/>
</dbReference>
<dbReference type="InterPro" id="IPR019756">
    <property type="entry name" value="Pept_S26A_signal_pept_1_Ser-AS"/>
</dbReference>
<dbReference type="InterPro" id="IPR019533">
    <property type="entry name" value="Peptidase_S26"/>
</dbReference>
<dbReference type="InterPro" id="IPR001733">
    <property type="entry name" value="Peptidase_S26B"/>
</dbReference>
<dbReference type="NCBIfam" id="TIGR02228">
    <property type="entry name" value="sigpep_I_arch"/>
    <property type="match status" value="1"/>
</dbReference>
<dbReference type="PANTHER" id="PTHR10806">
    <property type="entry name" value="SIGNAL PEPTIDASE COMPLEX CATALYTIC SUBUNIT SEC11"/>
    <property type="match status" value="1"/>
</dbReference>
<dbReference type="PANTHER" id="PTHR10806:SF6">
    <property type="entry name" value="SIGNAL PEPTIDASE COMPLEX CATALYTIC SUBUNIT SEC11"/>
    <property type="match status" value="1"/>
</dbReference>
<dbReference type="PRINTS" id="PR00728">
    <property type="entry name" value="SIGNALPTASE"/>
</dbReference>
<dbReference type="SUPFAM" id="SSF51306">
    <property type="entry name" value="LexA/Signal peptidase"/>
    <property type="match status" value="1"/>
</dbReference>
<dbReference type="PROSITE" id="PS00501">
    <property type="entry name" value="SPASE_I_1"/>
    <property type="match status" value="1"/>
</dbReference>
<evidence type="ECO:0000250" key="1">
    <source>
        <dbReference type="UniProtKB" id="P15367"/>
    </source>
</evidence>
<evidence type="ECO:0000250" key="2">
    <source>
        <dbReference type="UniProtKB" id="P67812"/>
    </source>
</evidence>
<evidence type="ECO:0000255" key="3"/>
<evidence type="ECO:0000305" key="4"/>
<proteinExistence type="inferred from homology"/>
<comment type="function">
    <text evidence="1 2">Catalytic component of the signal peptidase complex (SPC) which catalyzes the cleavage of N-terminal signal sequences from nascent proteins as they are translocated into the lumen of the endoplasmic reticulum (By similarity). Specifically cleaves N-terminal signal peptides that contain a hydrophobic alpha-helix (h-region) shorter than 18-20 amino acids (By similarity).</text>
</comment>
<comment type="catalytic activity">
    <reaction evidence="1">
        <text>Cleavage of hydrophobic, N-terminal signal or leader sequences from secreted and periplasmic proteins.</text>
        <dbReference type="EC" id="3.4.21.89"/>
    </reaction>
</comment>
<comment type="subunit">
    <text evidence="1 2">Component of the signal peptidase complex (SPC) composed of a catalytic subunit SEC11 and three accessory subunits SPC1, SPC2 and SPC3 (By similarity). The complex induces a local thinning of the ER membrane which is used to measure the length of the signal peptide (SP) h-region of protein substrates. This ensures the selectivity of the complex towards h-regions shorter than 18-20 amino acids (By similarity). SPC associates with the translocon complex (By similarity).</text>
</comment>
<comment type="subcellular location">
    <subcellularLocation>
        <location evidence="1">Endoplasmic reticulum membrane</location>
        <topology evidence="1">Single-pass type II membrane protein</topology>
    </subcellularLocation>
</comment>
<comment type="domain">
    <text evidence="2">The C-terminal short (CTS) helix is essential for catalytic activity. It may be accommodated as a transmembrane helix in the thinned membrane environment of the complex, similarly to the signal peptide in the complex substrates.</text>
</comment>
<comment type="similarity">
    <text evidence="4">Belongs to the peptidase S26B family.</text>
</comment>
<sequence length="192" mass="21385">MLSFLSSNLSSTRQSLAQVLNFALVLSTAFMLWKGLSVFTASSSPIVVVLSGSMEPAFQRGDLLFLWNRSPRAELGEIVVYNVRGKDIPIVHRVVRTFPEVEGKAKKVKEITGTSSIPPNMLLTKGDNNVADDTELYAKNQDFLHREEDIVGSVRGYMPMVGYVTIMLSEHPWLKTVLLGIMGLMVILQREQ</sequence>
<protein>
    <recommendedName>
        <fullName>Signal peptidase complex catalytic subunit sec11</fullName>
        <ecNumber evidence="1">3.4.21.89</ecNumber>
    </recommendedName>
    <alternativeName>
        <fullName>Signal peptidase I</fullName>
    </alternativeName>
</protein>
<gene>
    <name type="primary">sec11</name>
    <name type="ORF">ACLA_040690</name>
</gene>
<accession>A1CL29</accession>
<reference key="1">
    <citation type="journal article" date="2008" name="PLoS Genet.">
        <title>Genomic islands in the pathogenic filamentous fungus Aspergillus fumigatus.</title>
        <authorList>
            <person name="Fedorova N.D."/>
            <person name="Khaldi N."/>
            <person name="Joardar V.S."/>
            <person name="Maiti R."/>
            <person name="Amedeo P."/>
            <person name="Anderson M.J."/>
            <person name="Crabtree J."/>
            <person name="Silva J.C."/>
            <person name="Badger J.H."/>
            <person name="Albarraq A."/>
            <person name="Angiuoli S."/>
            <person name="Bussey H."/>
            <person name="Bowyer P."/>
            <person name="Cotty P.J."/>
            <person name="Dyer P.S."/>
            <person name="Egan A."/>
            <person name="Galens K."/>
            <person name="Fraser-Liggett C.M."/>
            <person name="Haas B.J."/>
            <person name="Inman J.M."/>
            <person name="Kent R."/>
            <person name="Lemieux S."/>
            <person name="Malavazi I."/>
            <person name="Orvis J."/>
            <person name="Roemer T."/>
            <person name="Ronning C.M."/>
            <person name="Sundaram J.P."/>
            <person name="Sutton G."/>
            <person name="Turner G."/>
            <person name="Venter J.C."/>
            <person name="White O.R."/>
            <person name="Whitty B.R."/>
            <person name="Youngman P."/>
            <person name="Wolfe K.H."/>
            <person name="Goldman G.H."/>
            <person name="Wortman J.R."/>
            <person name="Jiang B."/>
            <person name="Denning D.W."/>
            <person name="Nierman W.C."/>
        </authorList>
    </citation>
    <scope>NUCLEOTIDE SEQUENCE [LARGE SCALE GENOMIC DNA]</scope>
    <source>
        <strain>ATCC 1007 / CBS 513.65 / DSM 816 / NCTC 3887 / NRRL 1 / QM 1276 / 107</strain>
    </source>
</reference>